<reference key="1">
    <citation type="journal article" date="2004" name="Nature">
        <title>Genome evolution in yeasts.</title>
        <authorList>
            <person name="Dujon B."/>
            <person name="Sherman D."/>
            <person name="Fischer G."/>
            <person name="Durrens P."/>
            <person name="Casaregola S."/>
            <person name="Lafontaine I."/>
            <person name="de Montigny J."/>
            <person name="Marck C."/>
            <person name="Neuveglise C."/>
            <person name="Talla E."/>
            <person name="Goffard N."/>
            <person name="Frangeul L."/>
            <person name="Aigle M."/>
            <person name="Anthouard V."/>
            <person name="Babour A."/>
            <person name="Barbe V."/>
            <person name="Barnay S."/>
            <person name="Blanchin S."/>
            <person name="Beckerich J.-M."/>
            <person name="Beyne E."/>
            <person name="Bleykasten C."/>
            <person name="Boisrame A."/>
            <person name="Boyer J."/>
            <person name="Cattolico L."/>
            <person name="Confanioleri F."/>
            <person name="de Daruvar A."/>
            <person name="Despons L."/>
            <person name="Fabre E."/>
            <person name="Fairhead C."/>
            <person name="Ferry-Dumazet H."/>
            <person name="Groppi A."/>
            <person name="Hantraye F."/>
            <person name="Hennequin C."/>
            <person name="Jauniaux N."/>
            <person name="Joyet P."/>
            <person name="Kachouri R."/>
            <person name="Kerrest A."/>
            <person name="Koszul R."/>
            <person name="Lemaire M."/>
            <person name="Lesur I."/>
            <person name="Ma L."/>
            <person name="Muller H."/>
            <person name="Nicaud J.-M."/>
            <person name="Nikolski M."/>
            <person name="Oztas S."/>
            <person name="Ozier-Kalogeropoulos O."/>
            <person name="Pellenz S."/>
            <person name="Potier S."/>
            <person name="Richard G.-F."/>
            <person name="Straub M.-L."/>
            <person name="Suleau A."/>
            <person name="Swennen D."/>
            <person name="Tekaia F."/>
            <person name="Wesolowski-Louvel M."/>
            <person name="Westhof E."/>
            <person name="Wirth B."/>
            <person name="Zeniou-Meyer M."/>
            <person name="Zivanovic Y."/>
            <person name="Bolotin-Fukuhara M."/>
            <person name="Thierry A."/>
            <person name="Bouchier C."/>
            <person name="Caudron B."/>
            <person name="Scarpelli C."/>
            <person name="Gaillardin C."/>
            <person name="Weissenbach J."/>
            <person name="Wincker P."/>
            <person name="Souciet J.-L."/>
        </authorList>
    </citation>
    <scope>NUCLEOTIDE SEQUENCE [LARGE SCALE GENOMIC DNA]</scope>
    <source>
        <strain>ATCC 36239 / CBS 767 / BCRC 21394 / JCM 1990 / NBRC 0083 / IGC 2968</strain>
    </source>
</reference>
<evidence type="ECO:0000305" key="1"/>
<accession>Q6BM53</accession>
<dbReference type="EMBL" id="CR382138">
    <property type="protein sequence ID" value="CAG89058.1"/>
    <property type="molecule type" value="Genomic_DNA"/>
</dbReference>
<dbReference type="RefSeq" id="XP_460718.1">
    <property type="nucleotide sequence ID" value="XM_460718.1"/>
</dbReference>
<dbReference type="SMR" id="Q6BM53"/>
<dbReference type="FunCoup" id="Q6BM53">
    <property type="interactions" value="1094"/>
</dbReference>
<dbReference type="STRING" id="284592.Q6BM53"/>
<dbReference type="GeneID" id="2903335"/>
<dbReference type="KEGG" id="dha:DEHA2F08228g"/>
<dbReference type="VEuPathDB" id="FungiDB:DEHA2F08228g"/>
<dbReference type="eggNOG" id="KOG3353">
    <property type="taxonomic scope" value="Eukaryota"/>
</dbReference>
<dbReference type="HOGENOM" id="CLU_083987_0_0_1"/>
<dbReference type="InParanoid" id="Q6BM53"/>
<dbReference type="OMA" id="NTYETAR"/>
<dbReference type="OrthoDB" id="10254664at2759"/>
<dbReference type="Proteomes" id="UP000000599">
    <property type="component" value="Chromosome F"/>
</dbReference>
<dbReference type="GO" id="GO:0022625">
    <property type="term" value="C:cytosolic large ribosomal subunit"/>
    <property type="evidence" value="ECO:0007669"/>
    <property type="project" value="TreeGrafter"/>
</dbReference>
<dbReference type="GO" id="GO:0003735">
    <property type="term" value="F:structural constituent of ribosome"/>
    <property type="evidence" value="ECO:0007669"/>
    <property type="project" value="InterPro"/>
</dbReference>
<dbReference type="GO" id="GO:0002181">
    <property type="term" value="P:cytoplasmic translation"/>
    <property type="evidence" value="ECO:0007669"/>
    <property type="project" value="TreeGrafter"/>
</dbReference>
<dbReference type="CDD" id="cd00336">
    <property type="entry name" value="Ribosomal_L22"/>
    <property type="match status" value="1"/>
</dbReference>
<dbReference type="FunFam" id="3.90.470.10:FF:000010">
    <property type="entry name" value="60S ribosomal protein L17"/>
    <property type="match status" value="1"/>
</dbReference>
<dbReference type="Gene3D" id="3.90.470.10">
    <property type="entry name" value="Ribosomal protein L22/L17"/>
    <property type="match status" value="1"/>
</dbReference>
<dbReference type="InterPro" id="IPR001063">
    <property type="entry name" value="Ribosomal_uL22"/>
</dbReference>
<dbReference type="InterPro" id="IPR018260">
    <property type="entry name" value="Ribosomal_uL22_CS"/>
</dbReference>
<dbReference type="InterPro" id="IPR005721">
    <property type="entry name" value="Ribosomal_uL22_euk/arc"/>
</dbReference>
<dbReference type="InterPro" id="IPR036394">
    <property type="entry name" value="Ribosomal_uL22_sf"/>
</dbReference>
<dbReference type="NCBIfam" id="TIGR01038">
    <property type="entry name" value="uL22_arch_euk"/>
    <property type="match status" value="1"/>
</dbReference>
<dbReference type="PANTHER" id="PTHR11593">
    <property type="entry name" value="60S RIBOSOMAL PROTEIN L17"/>
    <property type="match status" value="1"/>
</dbReference>
<dbReference type="PANTHER" id="PTHR11593:SF10">
    <property type="entry name" value="60S RIBOSOMAL PROTEIN L17"/>
    <property type="match status" value="1"/>
</dbReference>
<dbReference type="Pfam" id="PF00237">
    <property type="entry name" value="Ribosomal_L22"/>
    <property type="match status" value="1"/>
</dbReference>
<dbReference type="SUPFAM" id="SSF54843">
    <property type="entry name" value="Ribosomal protein L22"/>
    <property type="match status" value="1"/>
</dbReference>
<dbReference type="PROSITE" id="PS00464">
    <property type="entry name" value="RIBOSOMAL_L22"/>
    <property type="match status" value="1"/>
</dbReference>
<feature type="chain" id="PRO_0000125342" description="Large ribosomal subunit protein uL22">
    <location>
        <begin position="1"/>
        <end position="185"/>
    </location>
</feature>
<proteinExistence type="inferred from homology"/>
<comment type="similarity">
    <text evidence="1">Belongs to the universal ribosomal protein uL22 family.</text>
</comment>
<sequence length="185" mass="20864">MVRYAATSANPAKSASARGSYLRVSYKNTRETAQAISGWKLERAQKYLDQVLDHQRAIPFRRFNSSIGRTGQGKEFGVTKARWPAKSVNFIKDLLRNGQANAESKGLDASKLKVSHIQVNQAPKQRRRTYRAHGRINAYQSSPCHIELILTEENEAVEKADDSKKVRLNVRQRGRLATQKRVTAA</sequence>
<gene>
    <name type="primary">RPL17</name>
    <name type="ordered locus">DEHA2F08228g</name>
</gene>
<keyword id="KW-1185">Reference proteome</keyword>
<keyword id="KW-0687">Ribonucleoprotein</keyword>
<keyword id="KW-0689">Ribosomal protein</keyword>
<protein>
    <recommendedName>
        <fullName evidence="1">Large ribosomal subunit protein uL22</fullName>
    </recommendedName>
    <alternativeName>
        <fullName>60S ribosomal protein L17</fullName>
    </alternativeName>
</protein>
<organism>
    <name type="scientific">Debaryomyces hansenii (strain ATCC 36239 / CBS 767 / BCRC 21394 / JCM 1990 / NBRC 0083 / IGC 2968)</name>
    <name type="common">Yeast</name>
    <name type="synonym">Torulaspora hansenii</name>
    <dbReference type="NCBI Taxonomy" id="284592"/>
    <lineage>
        <taxon>Eukaryota</taxon>
        <taxon>Fungi</taxon>
        <taxon>Dikarya</taxon>
        <taxon>Ascomycota</taxon>
        <taxon>Saccharomycotina</taxon>
        <taxon>Pichiomycetes</taxon>
        <taxon>Debaryomycetaceae</taxon>
        <taxon>Debaryomyces</taxon>
    </lineage>
</organism>
<name>RL17_DEBHA</name>